<accession>B3EMU1</accession>
<feature type="chain" id="PRO_1000094248" description="2-C-methyl-D-erythritol 2,4-cyclodiphosphate synthase">
    <location>
        <begin position="1"/>
        <end position="159"/>
    </location>
</feature>
<feature type="binding site" evidence="1">
    <location>
        <begin position="8"/>
        <end position="10"/>
    </location>
    <ligand>
        <name>4-CDP-2-C-methyl-D-erythritol 2-phosphate</name>
        <dbReference type="ChEBI" id="CHEBI:57919"/>
    </ligand>
</feature>
<feature type="binding site" evidence="1">
    <location>
        <position position="8"/>
    </location>
    <ligand>
        <name>a divalent metal cation</name>
        <dbReference type="ChEBI" id="CHEBI:60240"/>
    </ligand>
</feature>
<feature type="binding site" evidence="1">
    <location>
        <position position="10"/>
    </location>
    <ligand>
        <name>a divalent metal cation</name>
        <dbReference type="ChEBI" id="CHEBI:60240"/>
    </ligand>
</feature>
<feature type="binding site" evidence="1">
    <location>
        <begin position="34"/>
        <end position="35"/>
    </location>
    <ligand>
        <name>4-CDP-2-C-methyl-D-erythritol 2-phosphate</name>
        <dbReference type="ChEBI" id="CHEBI:57919"/>
    </ligand>
</feature>
<feature type="binding site" evidence="1">
    <location>
        <position position="42"/>
    </location>
    <ligand>
        <name>a divalent metal cation</name>
        <dbReference type="ChEBI" id="CHEBI:60240"/>
    </ligand>
</feature>
<feature type="binding site" evidence="1">
    <location>
        <begin position="56"/>
        <end position="58"/>
    </location>
    <ligand>
        <name>4-CDP-2-C-methyl-D-erythritol 2-phosphate</name>
        <dbReference type="ChEBI" id="CHEBI:57919"/>
    </ligand>
</feature>
<feature type="binding site" evidence="1">
    <location>
        <begin position="132"/>
        <end position="135"/>
    </location>
    <ligand>
        <name>4-CDP-2-C-methyl-D-erythritol 2-phosphate</name>
        <dbReference type="ChEBI" id="CHEBI:57919"/>
    </ligand>
</feature>
<feature type="binding site" evidence="1">
    <location>
        <position position="142"/>
    </location>
    <ligand>
        <name>4-CDP-2-C-methyl-D-erythritol 2-phosphate</name>
        <dbReference type="ChEBI" id="CHEBI:57919"/>
    </ligand>
</feature>
<feature type="site" description="Transition state stabilizer" evidence="1">
    <location>
        <position position="34"/>
    </location>
</feature>
<feature type="site" description="Transition state stabilizer" evidence="1">
    <location>
        <position position="133"/>
    </location>
</feature>
<evidence type="ECO:0000255" key="1">
    <source>
        <dbReference type="HAMAP-Rule" id="MF_00107"/>
    </source>
</evidence>
<reference key="1">
    <citation type="submission" date="2008-06" db="EMBL/GenBank/DDBJ databases">
        <title>Complete sequence of Chlorobium phaeobacteroides BS1.</title>
        <authorList>
            <consortium name="US DOE Joint Genome Institute"/>
            <person name="Lucas S."/>
            <person name="Copeland A."/>
            <person name="Lapidus A."/>
            <person name="Glavina del Rio T."/>
            <person name="Dalin E."/>
            <person name="Tice H."/>
            <person name="Bruce D."/>
            <person name="Goodwin L."/>
            <person name="Pitluck S."/>
            <person name="Schmutz J."/>
            <person name="Larimer F."/>
            <person name="Land M."/>
            <person name="Hauser L."/>
            <person name="Kyrpides N."/>
            <person name="Ovchinnikova G."/>
            <person name="Li T."/>
            <person name="Liu Z."/>
            <person name="Zhao F."/>
            <person name="Overmann J."/>
            <person name="Bryant D.A."/>
            <person name="Richardson P."/>
        </authorList>
    </citation>
    <scope>NUCLEOTIDE SEQUENCE [LARGE SCALE GENOMIC DNA]</scope>
    <source>
        <strain>BS1</strain>
    </source>
</reference>
<gene>
    <name evidence="1" type="primary">ispF</name>
    <name type="ordered locus">Cphamn1_0610</name>
</gene>
<organism>
    <name type="scientific">Chlorobium phaeobacteroides (strain BS1)</name>
    <dbReference type="NCBI Taxonomy" id="331678"/>
    <lineage>
        <taxon>Bacteria</taxon>
        <taxon>Pseudomonadati</taxon>
        <taxon>Chlorobiota</taxon>
        <taxon>Chlorobiia</taxon>
        <taxon>Chlorobiales</taxon>
        <taxon>Chlorobiaceae</taxon>
        <taxon>Chlorobium/Pelodictyon group</taxon>
        <taxon>Chlorobium</taxon>
    </lineage>
</organism>
<dbReference type="EC" id="4.6.1.12" evidence="1"/>
<dbReference type="EMBL" id="CP001101">
    <property type="protein sequence ID" value="ACE03569.1"/>
    <property type="molecule type" value="Genomic_DNA"/>
</dbReference>
<dbReference type="SMR" id="B3EMU1"/>
<dbReference type="STRING" id="331678.Cphamn1_0610"/>
<dbReference type="KEGG" id="cpb:Cphamn1_0610"/>
<dbReference type="eggNOG" id="COG0245">
    <property type="taxonomic scope" value="Bacteria"/>
</dbReference>
<dbReference type="HOGENOM" id="CLU_084630_2_0_10"/>
<dbReference type="OrthoDB" id="9804336at2"/>
<dbReference type="UniPathway" id="UPA00056">
    <property type="reaction ID" value="UER00095"/>
</dbReference>
<dbReference type="GO" id="GO:0008685">
    <property type="term" value="F:2-C-methyl-D-erythritol 2,4-cyclodiphosphate synthase activity"/>
    <property type="evidence" value="ECO:0007669"/>
    <property type="project" value="UniProtKB-UniRule"/>
</dbReference>
<dbReference type="GO" id="GO:0046872">
    <property type="term" value="F:metal ion binding"/>
    <property type="evidence" value="ECO:0007669"/>
    <property type="project" value="UniProtKB-KW"/>
</dbReference>
<dbReference type="GO" id="GO:0019288">
    <property type="term" value="P:isopentenyl diphosphate biosynthetic process, methylerythritol 4-phosphate pathway"/>
    <property type="evidence" value="ECO:0007669"/>
    <property type="project" value="UniProtKB-UniRule"/>
</dbReference>
<dbReference type="GO" id="GO:0016114">
    <property type="term" value="P:terpenoid biosynthetic process"/>
    <property type="evidence" value="ECO:0007669"/>
    <property type="project" value="InterPro"/>
</dbReference>
<dbReference type="CDD" id="cd00554">
    <property type="entry name" value="MECDP_synthase"/>
    <property type="match status" value="1"/>
</dbReference>
<dbReference type="FunFam" id="3.30.1330.50:FF:000001">
    <property type="entry name" value="2-C-methyl-D-erythritol 2,4-cyclodiphosphate synthase"/>
    <property type="match status" value="1"/>
</dbReference>
<dbReference type="Gene3D" id="3.30.1330.50">
    <property type="entry name" value="2-C-methyl-D-erythritol 2,4-cyclodiphosphate synthase"/>
    <property type="match status" value="1"/>
</dbReference>
<dbReference type="HAMAP" id="MF_00107">
    <property type="entry name" value="IspF"/>
    <property type="match status" value="1"/>
</dbReference>
<dbReference type="InterPro" id="IPR003526">
    <property type="entry name" value="MECDP_synthase"/>
</dbReference>
<dbReference type="InterPro" id="IPR020555">
    <property type="entry name" value="MECDP_synthase_CS"/>
</dbReference>
<dbReference type="InterPro" id="IPR036571">
    <property type="entry name" value="MECDP_synthase_sf"/>
</dbReference>
<dbReference type="NCBIfam" id="TIGR00151">
    <property type="entry name" value="ispF"/>
    <property type="match status" value="1"/>
</dbReference>
<dbReference type="PANTHER" id="PTHR43181">
    <property type="entry name" value="2-C-METHYL-D-ERYTHRITOL 2,4-CYCLODIPHOSPHATE SYNTHASE, CHLOROPLASTIC"/>
    <property type="match status" value="1"/>
</dbReference>
<dbReference type="PANTHER" id="PTHR43181:SF1">
    <property type="entry name" value="2-C-METHYL-D-ERYTHRITOL 2,4-CYCLODIPHOSPHATE SYNTHASE, CHLOROPLASTIC"/>
    <property type="match status" value="1"/>
</dbReference>
<dbReference type="Pfam" id="PF02542">
    <property type="entry name" value="YgbB"/>
    <property type="match status" value="1"/>
</dbReference>
<dbReference type="SUPFAM" id="SSF69765">
    <property type="entry name" value="IpsF-like"/>
    <property type="match status" value="1"/>
</dbReference>
<dbReference type="PROSITE" id="PS01350">
    <property type="entry name" value="ISPF"/>
    <property type="match status" value="1"/>
</dbReference>
<proteinExistence type="inferred from homology"/>
<comment type="function">
    <text evidence="1">Involved in the biosynthesis of isopentenyl diphosphate (IPP) and dimethylallyl diphosphate (DMAPP), two major building blocks of isoprenoid compounds. Catalyzes the conversion of 4-diphosphocytidyl-2-C-methyl-D-erythritol 2-phosphate (CDP-ME2P) to 2-C-methyl-D-erythritol 2,4-cyclodiphosphate (ME-CPP) with a corresponding release of cytidine 5-monophosphate (CMP).</text>
</comment>
<comment type="catalytic activity">
    <reaction evidence="1">
        <text>4-CDP-2-C-methyl-D-erythritol 2-phosphate = 2-C-methyl-D-erythritol 2,4-cyclic diphosphate + CMP</text>
        <dbReference type="Rhea" id="RHEA:23864"/>
        <dbReference type="ChEBI" id="CHEBI:57919"/>
        <dbReference type="ChEBI" id="CHEBI:58483"/>
        <dbReference type="ChEBI" id="CHEBI:60377"/>
        <dbReference type="EC" id="4.6.1.12"/>
    </reaction>
</comment>
<comment type="cofactor">
    <cofactor evidence="1">
        <name>a divalent metal cation</name>
        <dbReference type="ChEBI" id="CHEBI:60240"/>
    </cofactor>
    <text evidence="1">Binds 1 divalent metal cation per subunit.</text>
</comment>
<comment type="pathway">
    <text evidence="1">Isoprenoid biosynthesis; isopentenyl diphosphate biosynthesis via DXP pathway; isopentenyl diphosphate from 1-deoxy-D-xylulose 5-phosphate: step 4/6.</text>
</comment>
<comment type="subunit">
    <text evidence="1">Homotrimer.</text>
</comment>
<comment type="similarity">
    <text evidence="1">Belongs to the IspF family.</text>
</comment>
<name>ISPF_CHLPB</name>
<sequence length="159" mass="16896">MRIGTGIDVHQFAEGRKLIVGGVEIPHSKGLKGHSDADVLLHAISDALLGAAALGDIGKHFPDTSPQFKDIDSMILLQHVGKLIAEEGYAIGNIDSVLVMEKPKVAPHIMAMRGNIAACLDIDVSKVAVKATTTEKLGYVGREEGVAAHAICLIEERKQ</sequence>
<protein>
    <recommendedName>
        <fullName evidence="1">2-C-methyl-D-erythritol 2,4-cyclodiphosphate synthase</fullName>
        <shortName evidence="1">MECDP-synthase</shortName>
        <shortName evidence="1">MECPP-synthase</shortName>
        <shortName evidence="1">MECPS</shortName>
        <ecNumber evidence="1">4.6.1.12</ecNumber>
    </recommendedName>
</protein>
<keyword id="KW-0414">Isoprene biosynthesis</keyword>
<keyword id="KW-0456">Lyase</keyword>
<keyword id="KW-0479">Metal-binding</keyword>